<organism>
    <name type="scientific">Emericella nidulans (strain FGSC A4 / ATCC 38163 / CBS 112.46 / NRRL 194 / M139)</name>
    <name type="common">Aspergillus nidulans</name>
    <dbReference type="NCBI Taxonomy" id="227321"/>
    <lineage>
        <taxon>Eukaryota</taxon>
        <taxon>Fungi</taxon>
        <taxon>Dikarya</taxon>
        <taxon>Ascomycota</taxon>
        <taxon>Pezizomycotina</taxon>
        <taxon>Eurotiomycetes</taxon>
        <taxon>Eurotiomycetidae</taxon>
        <taxon>Eurotiales</taxon>
        <taxon>Aspergillaceae</taxon>
        <taxon>Aspergillus</taxon>
        <taxon>Aspergillus subgen. Nidulantes</taxon>
    </lineage>
</organism>
<protein>
    <recommendedName>
        <fullName>Adenylyl-sulfate kinase</fullName>
        <ecNumber>2.7.1.25</ecNumber>
    </recommendedName>
    <alternativeName>
        <fullName>ATP adenosine-5'-phosphosulfate 3'-phosphotransferase</fullName>
    </alternativeName>
    <alternativeName>
        <fullName>Adenosine-5'-phosphosulfate kinase</fullName>
        <shortName>APS kinase</shortName>
    </alternativeName>
</protein>
<keyword id="KW-0028">Amino-acid biosynthesis</keyword>
<keyword id="KW-0067">ATP-binding</keyword>
<keyword id="KW-0198">Cysteine biosynthesis</keyword>
<keyword id="KW-0418">Kinase</keyword>
<keyword id="KW-0486">Methionine biosynthesis</keyword>
<keyword id="KW-0547">Nucleotide-binding</keyword>
<keyword id="KW-0597">Phosphoprotein</keyword>
<keyword id="KW-1185">Reference proteome</keyword>
<keyword id="KW-0808">Transferase</keyword>
<comment type="function">
    <text>Catalyzes the synthesis of activated sulfate.</text>
</comment>
<comment type="catalytic activity">
    <reaction>
        <text>adenosine 5'-phosphosulfate + ATP = 3'-phosphoadenylyl sulfate + ADP + H(+)</text>
        <dbReference type="Rhea" id="RHEA:24152"/>
        <dbReference type="ChEBI" id="CHEBI:15378"/>
        <dbReference type="ChEBI" id="CHEBI:30616"/>
        <dbReference type="ChEBI" id="CHEBI:58243"/>
        <dbReference type="ChEBI" id="CHEBI:58339"/>
        <dbReference type="ChEBI" id="CHEBI:456216"/>
        <dbReference type="EC" id="2.7.1.25"/>
    </reaction>
</comment>
<comment type="pathway">
    <text>Sulfur metabolism; hydrogen sulfide biosynthesis; sulfite from sulfate: step 2/3.</text>
</comment>
<comment type="similarity">
    <text evidence="3">Belongs to the APS kinase family.</text>
</comment>
<evidence type="ECO:0000250" key="1"/>
<evidence type="ECO:0000255" key="2"/>
<evidence type="ECO:0000305" key="3"/>
<name>KAPS_EMENI</name>
<dbReference type="EC" id="2.7.1.25"/>
<dbReference type="EMBL" id="Y08866">
    <property type="protein sequence ID" value="CAA70089.1"/>
    <property type="molecule type" value="Genomic_DNA"/>
</dbReference>
<dbReference type="EMBL" id="AACD01000017">
    <property type="protein sequence ID" value="EAA65787.1"/>
    <property type="molecule type" value="Genomic_DNA"/>
</dbReference>
<dbReference type="EMBL" id="BN001308">
    <property type="protein sequence ID" value="CBF87959.1"/>
    <property type="molecule type" value="Genomic_DNA"/>
</dbReference>
<dbReference type="RefSeq" id="XP_658798.1">
    <property type="nucleotide sequence ID" value="XM_653706.1"/>
</dbReference>
<dbReference type="SMR" id="Q92203"/>
<dbReference type="FunCoup" id="Q92203">
    <property type="interactions" value="174"/>
</dbReference>
<dbReference type="STRING" id="227321.Q92203"/>
<dbReference type="EnsemblFungi" id="CBF87959">
    <property type="protein sequence ID" value="CBF87959"/>
    <property type="gene ID" value="ANIA_01194"/>
</dbReference>
<dbReference type="KEGG" id="ani:ANIA_01194"/>
<dbReference type="VEuPathDB" id="FungiDB:AN1194"/>
<dbReference type="eggNOG" id="KOG0635">
    <property type="taxonomic scope" value="Eukaryota"/>
</dbReference>
<dbReference type="HOGENOM" id="CLU_046932_1_0_1"/>
<dbReference type="InParanoid" id="Q92203"/>
<dbReference type="OMA" id="HENTVEE"/>
<dbReference type="OrthoDB" id="506431at2759"/>
<dbReference type="UniPathway" id="UPA00140">
    <property type="reaction ID" value="UER00205"/>
</dbReference>
<dbReference type="Proteomes" id="UP000000560">
    <property type="component" value="Chromosome VIII"/>
</dbReference>
<dbReference type="GO" id="GO:0004020">
    <property type="term" value="F:adenylylsulfate kinase activity"/>
    <property type="evidence" value="ECO:0000247"/>
    <property type="project" value="AspGD"/>
</dbReference>
<dbReference type="GO" id="GO:0005524">
    <property type="term" value="F:ATP binding"/>
    <property type="evidence" value="ECO:0007669"/>
    <property type="project" value="UniProtKB-KW"/>
</dbReference>
<dbReference type="GO" id="GO:0019344">
    <property type="term" value="P:cysteine biosynthetic process"/>
    <property type="evidence" value="ECO:0007669"/>
    <property type="project" value="UniProtKB-KW"/>
</dbReference>
<dbReference type="GO" id="GO:0070814">
    <property type="term" value="P:hydrogen sulfide biosynthetic process"/>
    <property type="evidence" value="ECO:0007669"/>
    <property type="project" value="UniProtKB-UniPathway"/>
</dbReference>
<dbReference type="GO" id="GO:0009086">
    <property type="term" value="P:methionine biosynthetic process"/>
    <property type="evidence" value="ECO:0007669"/>
    <property type="project" value="UniProtKB-KW"/>
</dbReference>
<dbReference type="GO" id="GO:0000103">
    <property type="term" value="P:sulfate assimilation"/>
    <property type="evidence" value="ECO:0000315"/>
    <property type="project" value="AspGD"/>
</dbReference>
<dbReference type="GO" id="GO:0019379">
    <property type="term" value="P:sulfate assimilation, phosphoadenylyl sulfate reduction by phosphoadenylyl-sulfate reductase (thioredoxin)"/>
    <property type="evidence" value="ECO:0007669"/>
    <property type="project" value="EnsemblFungi"/>
</dbReference>
<dbReference type="CDD" id="cd02027">
    <property type="entry name" value="APSK"/>
    <property type="match status" value="1"/>
</dbReference>
<dbReference type="FunFam" id="3.40.50.300:FF:000212">
    <property type="entry name" value="Adenylyl-sulfate kinase"/>
    <property type="match status" value="1"/>
</dbReference>
<dbReference type="Gene3D" id="3.40.50.300">
    <property type="entry name" value="P-loop containing nucleotide triphosphate hydrolases"/>
    <property type="match status" value="1"/>
</dbReference>
<dbReference type="HAMAP" id="MF_00065">
    <property type="entry name" value="Adenylyl_sulf_kinase"/>
    <property type="match status" value="1"/>
</dbReference>
<dbReference type="InterPro" id="IPR002891">
    <property type="entry name" value="APS_kinase"/>
</dbReference>
<dbReference type="InterPro" id="IPR027417">
    <property type="entry name" value="P-loop_NTPase"/>
</dbReference>
<dbReference type="NCBIfam" id="TIGR00455">
    <property type="entry name" value="apsK"/>
    <property type="match status" value="1"/>
</dbReference>
<dbReference type="NCBIfam" id="NF003013">
    <property type="entry name" value="PRK03846.1"/>
    <property type="match status" value="1"/>
</dbReference>
<dbReference type="PANTHER" id="PTHR11055">
    <property type="entry name" value="BIFUNCTIONAL 3'-PHOSPHOADENOSINE 5'-PHOSPHOSULFATE SYNTHASE"/>
    <property type="match status" value="1"/>
</dbReference>
<dbReference type="PANTHER" id="PTHR11055:SF1">
    <property type="entry name" value="PAPS SYNTHETASE, ISOFORM D"/>
    <property type="match status" value="1"/>
</dbReference>
<dbReference type="Pfam" id="PF01583">
    <property type="entry name" value="APS_kinase"/>
    <property type="match status" value="1"/>
</dbReference>
<dbReference type="SUPFAM" id="SSF52540">
    <property type="entry name" value="P-loop containing nucleoside triphosphate hydrolases"/>
    <property type="match status" value="1"/>
</dbReference>
<accession>Q92203</accession>
<accession>C8VSU8</accession>
<accession>Q5BE36</accession>
<proteinExistence type="inferred from homology"/>
<sequence>MATNITHHAGITRNERNQLRKQKGLTIWLTGLSASGKSTIAVELEHQLLQRGLHAYRLDGDNVRFGLNKDLGFSDADRNENIRRIAEVAKLFADSSSIAITSFISPFRADRDTARKLHEVPTPNDSTGLPFVEVFVDVPIEVAEKRDPKGLYKKAREGIIKEFTGISSPYEAPENPEVHVKNVDLPIQEAVKQIIDYLDSKKLLDA</sequence>
<reference key="1">
    <citation type="submission" date="1996-10" db="EMBL/GenBank/DDBJ databases">
        <title>Cloning and characterisation of the APS kinase gene from Aspergillus nidulans.</title>
        <authorList>
            <person name="Clarke D.L."/>
            <person name="Newbert R.W."/>
            <person name="Turner G."/>
        </authorList>
    </citation>
    <scope>NUCLEOTIDE SEQUENCE [GENOMIC DNA]</scope>
</reference>
<reference key="2">
    <citation type="journal article" date="2005" name="Nature">
        <title>Sequencing of Aspergillus nidulans and comparative analysis with A. fumigatus and A. oryzae.</title>
        <authorList>
            <person name="Galagan J.E."/>
            <person name="Calvo S.E."/>
            <person name="Cuomo C."/>
            <person name="Ma L.-J."/>
            <person name="Wortman J.R."/>
            <person name="Batzoglou S."/>
            <person name="Lee S.-I."/>
            <person name="Bastuerkmen M."/>
            <person name="Spevak C.C."/>
            <person name="Clutterbuck J."/>
            <person name="Kapitonov V."/>
            <person name="Jurka J."/>
            <person name="Scazzocchio C."/>
            <person name="Farman M.L."/>
            <person name="Butler J."/>
            <person name="Purcell S."/>
            <person name="Harris S."/>
            <person name="Braus G.H."/>
            <person name="Draht O."/>
            <person name="Busch S."/>
            <person name="D'Enfert C."/>
            <person name="Bouchier C."/>
            <person name="Goldman G.H."/>
            <person name="Bell-Pedersen D."/>
            <person name="Griffiths-Jones S."/>
            <person name="Doonan J.H."/>
            <person name="Yu J."/>
            <person name="Vienken K."/>
            <person name="Pain A."/>
            <person name="Freitag M."/>
            <person name="Selker E.U."/>
            <person name="Archer D.B."/>
            <person name="Penalva M.A."/>
            <person name="Oakley B.R."/>
            <person name="Momany M."/>
            <person name="Tanaka T."/>
            <person name="Kumagai T."/>
            <person name="Asai K."/>
            <person name="Machida M."/>
            <person name="Nierman W.C."/>
            <person name="Denning D.W."/>
            <person name="Caddick M.X."/>
            <person name="Hynes M."/>
            <person name="Paoletti M."/>
            <person name="Fischer R."/>
            <person name="Miller B.L."/>
            <person name="Dyer P.S."/>
            <person name="Sachs M.S."/>
            <person name="Osmani S.A."/>
            <person name="Birren B.W."/>
        </authorList>
    </citation>
    <scope>NUCLEOTIDE SEQUENCE [LARGE SCALE GENOMIC DNA]</scope>
    <source>
        <strain>FGSC A4 / ATCC 38163 / CBS 112.46 / NRRL 194 / M139</strain>
    </source>
</reference>
<reference key="3">
    <citation type="journal article" date="2009" name="Fungal Genet. Biol.">
        <title>The 2008 update of the Aspergillus nidulans genome annotation: a community effort.</title>
        <authorList>
            <person name="Wortman J.R."/>
            <person name="Gilsenan J.M."/>
            <person name="Joardar V."/>
            <person name="Deegan J."/>
            <person name="Clutterbuck J."/>
            <person name="Andersen M.R."/>
            <person name="Archer D."/>
            <person name="Bencina M."/>
            <person name="Braus G."/>
            <person name="Coutinho P."/>
            <person name="von Dohren H."/>
            <person name="Doonan J."/>
            <person name="Driessen A.J."/>
            <person name="Durek P."/>
            <person name="Espeso E."/>
            <person name="Fekete E."/>
            <person name="Flipphi M."/>
            <person name="Estrada C.G."/>
            <person name="Geysens S."/>
            <person name="Goldman G."/>
            <person name="de Groot P.W."/>
            <person name="Hansen K."/>
            <person name="Harris S.D."/>
            <person name="Heinekamp T."/>
            <person name="Helmstaedt K."/>
            <person name="Henrissat B."/>
            <person name="Hofmann G."/>
            <person name="Homan T."/>
            <person name="Horio T."/>
            <person name="Horiuchi H."/>
            <person name="James S."/>
            <person name="Jones M."/>
            <person name="Karaffa L."/>
            <person name="Karanyi Z."/>
            <person name="Kato M."/>
            <person name="Keller N."/>
            <person name="Kelly D.E."/>
            <person name="Kiel J.A."/>
            <person name="Kim J.M."/>
            <person name="van der Klei I.J."/>
            <person name="Klis F.M."/>
            <person name="Kovalchuk A."/>
            <person name="Krasevec N."/>
            <person name="Kubicek C.P."/>
            <person name="Liu B."/>
            <person name="Maccabe A."/>
            <person name="Meyer V."/>
            <person name="Mirabito P."/>
            <person name="Miskei M."/>
            <person name="Mos M."/>
            <person name="Mullins J."/>
            <person name="Nelson D.R."/>
            <person name="Nielsen J."/>
            <person name="Oakley B.R."/>
            <person name="Osmani S.A."/>
            <person name="Pakula T."/>
            <person name="Paszewski A."/>
            <person name="Paulsen I."/>
            <person name="Pilsyk S."/>
            <person name="Pocsi I."/>
            <person name="Punt P.J."/>
            <person name="Ram A.F."/>
            <person name="Ren Q."/>
            <person name="Robellet X."/>
            <person name="Robson G."/>
            <person name="Seiboth B."/>
            <person name="van Solingen P."/>
            <person name="Specht T."/>
            <person name="Sun J."/>
            <person name="Taheri-Talesh N."/>
            <person name="Takeshita N."/>
            <person name="Ussery D."/>
            <person name="vanKuyk P.A."/>
            <person name="Visser H."/>
            <person name="van de Vondervoort P.J."/>
            <person name="de Vries R.P."/>
            <person name="Walton J."/>
            <person name="Xiang X."/>
            <person name="Xiong Y."/>
            <person name="Zeng A.P."/>
            <person name="Brandt B.W."/>
            <person name="Cornell M.J."/>
            <person name="van den Hondel C.A."/>
            <person name="Visser J."/>
            <person name="Oliver S.G."/>
            <person name="Turner G."/>
        </authorList>
    </citation>
    <scope>GENOME REANNOTATION</scope>
    <source>
        <strain>FGSC A4 / ATCC 38163 / CBS 112.46 / NRRL 194 / M139</strain>
    </source>
</reference>
<gene>
    <name type="primary">sD</name>
    <name type="ORF">AN1194</name>
</gene>
<feature type="chain" id="PRO_0000105931" description="Adenylyl-sulfate kinase">
    <location>
        <begin position="1"/>
        <end position="206"/>
    </location>
</feature>
<feature type="active site" description="Phosphoserine intermediate" evidence="1">
    <location>
        <position position="105"/>
    </location>
</feature>
<feature type="binding site" evidence="2">
    <location>
        <begin position="31"/>
        <end position="38"/>
    </location>
    <ligand>
        <name>ATP</name>
        <dbReference type="ChEBI" id="CHEBI:30616"/>
    </ligand>
</feature>
<feature type="sequence conflict" description="In Ref. 1; CAA70089." evidence="3" ref="1">
    <original>I</original>
    <variation>L</variation>
    <location>
        <position position="11"/>
    </location>
</feature>